<accession>O83588</accession>
<organism>
    <name type="scientific">Treponema pallidum (strain Nichols)</name>
    <dbReference type="NCBI Taxonomy" id="243276"/>
    <lineage>
        <taxon>Bacteria</taxon>
        <taxon>Pseudomonadati</taxon>
        <taxon>Spirochaetota</taxon>
        <taxon>Spirochaetia</taxon>
        <taxon>Spirochaetales</taxon>
        <taxon>Treponemataceae</taxon>
        <taxon>Treponema</taxon>
    </lineage>
</organism>
<reference key="1">
    <citation type="journal article" date="1998" name="Science">
        <title>Complete genome sequence of Treponema pallidum, the syphilis spirochete.</title>
        <authorList>
            <person name="Fraser C.M."/>
            <person name="Norris S.J."/>
            <person name="Weinstock G.M."/>
            <person name="White O."/>
            <person name="Sutton G.G."/>
            <person name="Dodson R.J."/>
            <person name="Gwinn M.L."/>
            <person name="Hickey E.K."/>
            <person name="Clayton R.A."/>
            <person name="Ketchum K.A."/>
            <person name="Sodergren E."/>
            <person name="Hardham J.M."/>
            <person name="McLeod M.P."/>
            <person name="Salzberg S.L."/>
            <person name="Peterson J.D."/>
            <person name="Khalak H.G."/>
            <person name="Richardson D.L."/>
            <person name="Howell J.K."/>
            <person name="Chidambaram M."/>
            <person name="Utterback T.R."/>
            <person name="McDonald L.A."/>
            <person name="Artiach P."/>
            <person name="Bowman C."/>
            <person name="Cotton M.D."/>
            <person name="Fujii C."/>
            <person name="Garland S.A."/>
            <person name="Hatch B."/>
            <person name="Horst K."/>
            <person name="Roberts K.M."/>
            <person name="Sandusky M."/>
            <person name="Weidman J.F."/>
            <person name="Smith H.O."/>
            <person name="Venter J.C."/>
        </authorList>
    </citation>
    <scope>NUCLEOTIDE SEQUENCE [LARGE SCALE GENOMIC DNA]</scope>
    <source>
        <strain>Nichols</strain>
    </source>
</reference>
<protein>
    <recommendedName>
        <fullName>Uncharacterized protein TP_0579</fullName>
    </recommendedName>
</protein>
<keyword id="KW-1185">Reference proteome</keyword>
<dbReference type="EMBL" id="AE000520">
    <property type="protein sequence ID" value="AAC65559.1"/>
    <property type="molecule type" value="Genomic_DNA"/>
</dbReference>
<dbReference type="PIR" id="A71307">
    <property type="entry name" value="A71307"/>
</dbReference>
<dbReference type="RefSeq" id="WP_010882025.1">
    <property type="nucleotide sequence ID" value="NC_021490.2"/>
</dbReference>
<dbReference type="IntAct" id="O83588">
    <property type="interactions" value="6"/>
</dbReference>
<dbReference type="STRING" id="243276.TP_0579"/>
<dbReference type="EnsemblBacteria" id="AAC65559">
    <property type="protein sequence ID" value="AAC65559"/>
    <property type="gene ID" value="TP_0579"/>
</dbReference>
<dbReference type="KEGG" id="tpa:TP_0579"/>
<dbReference type="KEGG" id="tpw:TPANIC_0579"/>
<dbReference type="HOGENOM" id="CLU_1077441_0_0_12"/>
<dbReference type="OrthoDB" id="362954at2"/>
<dbReference type="Proteomes" id="UP000000811">
    <property type="component" value="Chromosome"/>
</dbReference>
<evidence type="ECO:0000256" key="1">
    <source>
        <dbReference type="SAM" id="MobiDB-lite"/>
    </source>
</evidence>
<gene>
    <name type="ordered locus">TP_0579</name>
</gene>
<feature type="chain" id="PRO_0000202278" description="Uncharacterized protein TP_0579">
    <location>
        <begin position="1"/>
        <end position="258"/>
    </location>
</feature>
<feature type="region of interest" description="Disordered" evidence="1">
    <location>
        <begin position="40"/>
        <end position="63"/>
    </location>
</feature>
<feature type="compositionally biased region" description="Polar residues" evidence="1">
    <location>
        <begin position="40"/>
        <end position="54"/>
    </location>
</feature>
<proteinExistence type="predicted"/>
<sequence length="258" mass="29464">MIRPRYGWMYSSGIAVHLCAAVCAHSAVPAAWTFAEQTQAQKTDTPLDSSSYAVTSPEEAPNEADPFEKELEHAFERAHVSTGGADSSSHADFVHMEEAGRAHASANRWYHETFDSRQRPSSAVLYEGAQLLHTVHWHYVGDRLFPCEKIITTPHTRIRARYNFSGKIVAYEMHTRGVLVYARTYRYDAHARICEKEETTARGNERITYEYRGKVDVLEKRYRNGVLQAIIHQKEGAQDVQVFERGKEIYSTKEVHDE</sequence>
<name>Y579_TREPA</name>